<protein>
    <recommendedName>
        <fullName>Olfactory receptor 4A5</fullName>
    </recommendedName>
    <alternativeName>
        <fullName>Olfactory receptor OR11-111</fullName>
    </alternativeName>
</protein>
<dbReference type="EMBL" id="AB065506">
    <property type="protein sequence ID" value="BAC05754.1"/>
    <property type="molecule type" value="Genomic_DNA"/>
</dbReference>
<dbReference type="EMBL" id="AC087377">
    <property type="status" value="NOT_ANNOTATED_CDS"/>
    <property type="molecule type" value="Genomic_DNA"/>
</dbReference>
<dbReference type="EMBL" id="BK004378">
    <property type="protein sequence ID" value="DAA04776.1"/>
    <property type="molecule type" value="Genomic_DNA"/>
</dbReference>
<dbReference type="CCDS" id="CCDS73289.1"/>
<dbReference type="RefSeq" id="NP_001005272.3">
    <property type="nucleotide sequence ID" value="NM_001005272.3"/>
</dbReference>
<dbReference type="SMR" id="Q8NH83"/>
<dbReference type="FunCoup" id="Q8NH83">
    <property type="interactions" value="416"/>
</dbReference>
<dbReference type="STRING" id="9606.ENSP00000367664"/>
<dbReference type="GlyCosmos" id="Q8NH83">
    <property type="glycosylation" value="1 site, No reported glycans"/>
</dbReference>
<dbReference type="GlyGen" id="Q8NH83">
    <property type="glycosylation" value="1 site"/>
</dbReference>
<dbReference type="iPTMnet" id="Q8NH83"/>
<dbReference type="PhosphoSitePlus" id="Q8NH83"/>
<dbReference type="BioMuta" id="OR4A5"/>
<dbReference type="DMDM" id="327478606"/>
<dbReference type="jPOST" id="Q8NH83"/>
<dbReference type="MassIVE" id="Q8NH83"/>
<dbReference type="PaxDb" id="9606-ENSP00000367664"/>
<dbReference type="PeptideAtlas" id="Q8NH83"/>
<dbReference type="ProteomicsDB" id="73683"/>
<dbReference type="Antibodypedia" id="27099">
    <property type="antibodies" value="18 antibodies from 9 providers"/>
</dbReference>
<dbReference type="DNASU" id="81318"/>
<dbReference type="Ensembl" id="ENST00000319760.8">
    <property type="protein sequence ID" value="ENSP00000367664.2"/>
    <property type="gene ID" value="ENSG00000221840.4"/>
</dbReference>
<dbReference type="GeneID" id="81318"/>
<dbReference type="KEGG" id="hsa:81318"/>
<dbReference type="MANE-Select" id="ENST00000319760.8">
    <property type="protein sequence ID" value="ENSP00000367664.2"/>
    <property type="RefSeq nucleotide sequence ID" value="NM_001005272.3"/>
    <property type="RefSeq protein sequence ID" value="NP_001005272.3"/>
</dbReference>
<dbReference type="UCSC" id="uc001nhi.3">
    <property type="organism name" value="human"/>
</dbReference>
<dbReference type="AGR" id="HGNC:15162"/>
<dbReference type="CTD" id="81318"/>
<dbReference type="GeneCards" id="OR4A5"/>
<dbReference type="HGNC" id="HGNC:15162">
    <property type="gene designation" value="OR4A5"/>
</dbReference>
<dbReference type="HPA" id="ENSG00000221840">
    <property type="expression patterns" value="Not detected"/>
</dbReference>
<dbReference type="neXtProt" id="NX_Q8NH83"/>
<dbReference type="OpenTargets" id="ENSG00000221840"/>
<dbReference type="VEuPathDB" id="HostDB:ENSG00000221840"/>
<dbReference type="eggNOG" id="ENOG502SJPV">
    <property type="taxonomic scope" value="Eukaryota"/>
</dbReference>
<dbReference type="GeneTree" id="ENSGT00940000155775"/>
<dbReference type="HOGENOM" id="CLU_012526_8_1_1"/>
<dbReference type="InParanoid" id="Q8NH83"/>
<dbReference type="OMA" id="NAMEKFW"/>
<dbReference type="OrthoDB" id="10017003at2759"/>
<dbReference type="PAN-GO" id="Q8NH83">
    <property type="GO annotations" value="2 GO annotations based on evolutionary models"/>
</dbReference>
<dbReference type="PhylomeDB" id="Q8NH83"/>
<dbReference type="TreeFam" id="TF337251"/>
<dbReference type="PathwayCommons" id="Q8NH83"/>
<dbReference type="Reactome" id="R-HSA-9752946">
    <property type="pathway name" value="Expression and translocation of olfactory receptors"/>
</dbReference>
<dbReference type="BioGRID-ORCS" id="81318">
    <property type="hits" value="15 hits in 680 CRISPR screens"/>
</dbReference>
<dbReference type="GeneWiki" id="OR4A5"/>
<dbReference type="GenomeRNAi" id="81318"/>
<dbReference type="Pharos" id="Q8NH83">
    <property type="development level" value="Tdark"/>
</dbReference>
<dbReference type="PRO" id="PR:Q8NH83"/>
<dbReference type="Proteomes" id="UP000005640">
    <property type="component" value="Chromosome 11"/>
</dbReference>
<dbReference type="RNAct" id="Q8NH83">
    <property type="molecule type" value="protein"/>
</dbReference>
<dbReference type="ExpressionAtlas" id="Q8NH83">
    <property type="expression patterns" value="baseline and differential"/>
</dbReference>
<dbReference type="GO" id="GO:0005886">
    <property type="term" value="C:plasma membrane"/>
    <property type="evidence" value="ECO:0000318"/>
    <property type="project" value="GO_Central"/>
</dbReference>
<dbReference type="GO" id="GO:0004930">
    <property type="term" value="F:G protein-coupled receptor activity"/>
    <property type="evidence" value="ECO:0007669"/>
    <property type="project" value="UniProtKB-KW"/>
</dbReference>
<dbReference type="GO" id="GO:0004984">
    <property type="term" value="F:olfactory receptor activity"/>
    <property type="evidence" value="ECO:0000318"/>
    <property type="project" value="GO_Central"/>
</dbReference>
<dbReference type="CDD" id="cd15939">
    <property type="entry name" value="7tmA_OR4A-like"/>
    <property type="match status" value="1"/>
</dbReference>
<dbReference type="FunFam" id="1.20.1070.10:FF:000007">
    <property type="entry name" value="Olfactory receptor"/>
    <property type="match status" value="1"/>
</dbReference>
<dbReference type="Gene3D" id="1.20.1070.10">
    <property type="entry name" value="Rhodopsin 7-helix transmembrane proteins"/>
    <property type="match status" value="1"/>
</dbReference>
<dbReference type="InterPro" id="IPR000276">
    <property type="entry name" value="GPCR_Rhodpsn"/>
</dbReference>
<dbReference type="InterPro" id="IPR017452">
    <property type="entry name" value="GPCR_Rhodpsn_7TM"/>
</dbReference>
<dbReference type="InterPro" id="IPR000725">
    <property type="entry name" value="Olfact_rcpt"/>
</dbReference>
<dbReference type="InterPro" id="IPR050427">
    <property type="entry name" value="Olfactory_Receptors"/>
</dbReference>
<dbReference type="PANTHER" id="PTHR48002">
    <property type="entry name" value="OLFACTORY RECEPTOR"/>
    <property type="match status" value="1"/>
</dbReference>
<dbReference type="Pfam" id="PF13853">
    <property type="entry name" value="7tm_4"/>
    <property type="match status" value="1"/>
</dbReference>
<dbReference type="PRINTS" id="PR00237">
    <property type="entry name" value="GPCRRHODOPSN"/>
</dbReference>
<dbReference type="PRINTS" id="PR00245">
    <property type="entry name" value="OLFACTORYR"/>
</dbReference>
<dbReference type="SUPFAM" id="SSF81321">
    <property type="entry name" value="Family A G protein-coupled receptor-like"/>
    <property type="match status" value="1"/>
</dbReference>
<dbReference type="PROSITE" id="PS00237">
    <property type="entry name" value="G_PROTEIN_RECEP_F1_1"/>
    <property type="match status" value="1"/>
</dbReference>
<dbReference type="PROSITE" id="PS50262">
    <property type="entry name" value="G_PROTEIN_RECEP_F1_2"/>
    <property type="match status" value="1"/>
</dbReference>
<feature type="chain" id="PRO_0000150524" description="Olfactory receptor 4A5">
    <location>
        <begin position="1"/>
        <end position="315"/>
    </location>
</feature>
<feature type="topological domain" description="Extracellular" evidence="1">
    <location>
        <begin position="1"/>
        <end position="23"/>
    </location>
</feature>
<feature type="transmembrane region" description="Helical; Name=1" evidence="1">
    <location>
        <begin position="24"/>
        <end position="47"/>
    </location>
</feature>
<feature type="topological domain" description="Cytoplasmic" evidence="1">
    <location>
        <begin position="48"/>
        <end position="55"/>
    </location>
</feature>
<feature type="transmembrane region" description="Helical; Name=2" evidence="1">
    <location>
        <begin position="56"/>
        <end position="77"/>
    </location>
</feature>
<feature type="topological domain" description="Extracellular" evidence="1">
    <location>
        <begin position="78"/>
        <end position="98"/>
    </location>
</feature>
<feature type="transmembrane region" description="Helical; Name=3" evidence="1">
    <location>
        <begin position="99"/>
        <end position="118"/>
    </location>
</feature>
<feature type="topological domain" description="Cytoplasmic" evidence="1">
    <location>
        <begin position="119"/>
        <end position="137"/>
    </location>
</feature>
<feature type="transmembrane region" description="Helical; Name=4" evidence="1">
    <location>
        <begin position="138"/>
        <end position="156"/>
    </location>
</feature>
<feature type="topological domain" description="Extracellular" evidence="1">
    <location>
        <begin position="157"/>
        <end position="192"/>
    </location>
</feature>
<feature type="transmembrane region" description="Helical; Name=5" evidence="1">
    <location>
        <begin position="193"/>
        <end position="216"/>
    </location>
</feature>
<feature type="topological domain" description="Cytoplasmic" evidence="1">
    <location>
        <begin position="217"/>
        <end position="232"/>
    </location>
</feature>
<feature type="transmembrane region" description="Helical; Name=6" evidence="1">
    <location>
        <begin position="233"/>
        <end position="255"/>
    </location>
</feature>
<feature type="topological domain" description="Extracellular" evidence="1">
    <location>
        <begin position="256"/>
        <end position="266"/>
    </location>
</feature>
<feature type="transmembrane region" description="Helical; Name=7" evidence="1">
    <location>
        <begin position="267"/>
        <end position="286"/>
    </location>
</feature>
<feature type="topological domain" description="Cytoplasmic" evidence="1">
    <location>
        <begin position="287"/>
        <end position="315"/>
    </location>
</feature>
<feature type="glycosylation site" description="N-linked (GlcNAc...) asparagine" evidence="1">
    <location>
        <position position="6"/>
    </location>
</feature>
<feature type="disulfide bond" evidence="2">
    <location>
        <begin position="95"/>
        <end position="186"/>
    </location>
</feature>
<feature type="sequence variant" id="VAR_031741" description="In dbSNP:rs10902343.">
    <original>N</original>
    <variation>S</variation>
    <location>
        <position position="6"/>
    </location>
</feature>
<feature type="sequence variant" id="VAR_062033" description="In dbSNP:rs56302591.">
    <original>K</original>
    <variation>N</variation>
    <location>
        <position position="23"/>
    </location>
</feature>
<feature type="sequence variant" id="VAR_062034" description="In dbSNP:rs35083184.">
    <original>L</original>
    <variation>Q</variation>
    <location>
        <position position="219"/>
    </location>
</feature>
<feature type="sequence conflict" description="In Ref. 1; BAC05754." evidence="3" ref="1">
    <original>S</original>
    <variation>F</variation>
    <location>
        <position position="16"/>
    </location>
</feature>
<feature type="sequence conflict" description="In Ref. 1; BAC05754." evidence="3" ref="1">
    <original>IA</original>
    <variation>FS</variation>
    <location>
        <begin position="48"/>
        <end position="49"/>
    </location>
</feature>
<feature type="sequence conflict" description="In Ref. 1; BAC05754." evidence="3" ref="1">
    <original>GSP</original>
    <variation>CSA</variation>
    <location>
        <begin position="54"/>
        <end position="56"/>
    </location>
</feature>
<evidence type="ECO:0000255" key="1"/>
<evidence type="ECO:0000255" key="2">
    <source>
        <dbReference type="PROSITE-ProRule" id="PRU00521"/>
    </source>
</evidence>
<evidence type="ECO:0000305" key="3"/>
<keyword id="KW-1003">Cell membrane</keyword>
<keyword id="KW-1015">Disulfide bond</keyword>
<keyword id="KW-0297">G-protein coupled receptor</keyword>
<keyword id="KW-0325">Glycoprotein</keyword>
<keyword id="KW-0472">Membrane</keyword>
<keyword id="KW-0552">Olfaction</keyword>
<keyword id="KW-0675">Receptor</keyword>
<keyword id="KW-1185">Reference proteome</keyword>
<keyword id="KW-0716">Sensory transduction</keyword>
<keyword id="KW-0807">Transducer</keyword>
<keyword id="KW-0812">Transmembrane</keyword>
<keyword id="KW-1133">Transmembrane helix</keyword>
<accession>Q8NH83</accession>
<accession>Q6IF84</accession>
<comment type="function">
    <text evidence="3">Odorant receptor.</text>
</comment>
<comment type="subcellular location">
    <subcellularLocation>
        <location>Cell membrane</location>
        <topology>Multi-pass membrane protein</topology>
    </subcellularLocation>
</comment>
<comment type="similarity">
    <text evidence="2">Belongs to the G-protein coupled receptor 1 family.</text>
</comment>
<comment type="online information" name="Human Olfactory Receptor Data Exploratorium (HORDE)">
    <link uri="http://genome.weizmann.ac.il/horde/card/index/symbol:OR4A5"/>
</comment>
<sequence>MRQNNNITEFVLLGFSQDPGVQKALFVMFLLTYLVTVVGNLLIVVDIIASPSLGSPMYFFLACLSFIDAAYSTTISPKLIVGLFCDKKTISFQGCMGQLFIDHFFGGAEVFLLVVMACDRYVAICKPLHYLTIMNRQVCFLLLVVAMIGGFVHSAFQIVVYSLPFCGPNVIVHFSCDMHPLLELACTDTYFIGLTVVVNSGAICMVIFNLLLISYGVILSSLKTYSQEKRGKALSTCSSGSTVVVLFFVPCIFIYVRPVSNFPTDKFMTVFYTIITHMLSPLIYTLRNSEMRNAIEKLLGKKLTIFIIGGVSVLM</sequence>
<reference key="1">
    <citation type="submission" date="2001-07" db="EMBL/GenBank/DDBJ databases">
        <title>Genome-wide discovery and analysis of human seven transmembrane helix receptor genes.</title>
        <authorList>
            <person name="Suwa M."/>
            <person name="Sato T."/>
            <person name="Okouchi I."/>
            <person name="Arita M."/>
            <person name="Futami K."/>
            <person name="Matsumoto S."/>
            <person name="Tsutsumi S."/>
            <person name="Aburatani H."/>
            <person name="Asai K."/>
            <person name="Akiyama Y."/>
        </authorList>
    </citation>
    <scope>NUCLEOTIDE SEQUENCE [GENOMIC DNA]</scope>
</reference>
<reference key="2">
    <citation type="journal article" date="2006" name="Nature">
        <title>Human chromosome 11 DNA sequence and analysis including novel gene identification.</title>
        <authorList>
            <person name="Taylor T.D."/>
            <person name="Noguchi H."/>
            <person name="Totoki Y."/>
            <person name="Toyoda A."/>
            <person name="Kuroki Y."/>
            <person name="Dewar K."/>
            <person name="Lloyd C."/>
            <person name="Itoh T."/>
            <person name="Takeda T."/>
            <person name="Kim D.-W."/>
            <person name="She X."/>
            <person name="Barlow K.F."/>
            <person name="Bloom T."/>
            <person name="Bruford E."/>
            <person name="Chang J.L."/>
            <person name="Cuomo C.A."/>
            <person name="Eichler E."/>
            <person name="FitzGerald M.G."/>
            <person name="Jaffe D.B."/>
            <person name="LaButti K."/>
            <person name="Nicol R."/>
            <person name="Park H.-S."/>
            <person name="Seaman C."/>
            <person name="Sougnez C."/>
            <person name="Yang X."/>
            <person name="Zimmer A.R."/>
            <person name="Zody M.C."/>
            <person name="Birren B.W."/>
            <person name="Nusbaum C."/>
            <person name="Fujiyama A."/>
            <person name="Hattori M."/>
            <person name="Rogers J."/>
            <person name="Lander E.S."/>
            <person name="Sakaki Y."/>
        </authorList>
    </citation>
    <scope>NUCLEOTIDE SEQUENCE [LARGE SCALE GENOMIC DNA]</scope>
</reference>
<reference key="3">
    <citation type="journal article" date="2004" name="Proc. Natl. Acad. Sci. U.S.A.">
        <title>The human olfactory receptor gene family.</title>
        <authorList>
            <person name="Malnic B."/>
            <person name="Godfrey P.A."/>
            <person name="Buck L.B."/>
        </authorList>
    </citation>
    <scope>IDENTIFICATION</scope>
</reference>
<reference key="4">
    <citation type="journal article" date="2004" name="Proc. Natl. Acad. Sci. U.S.A.">
        <authorList>
            <person name="Malnic B."/>
            <person name="Godfrey P.A."/>
            <person name="Buck L.B."/>
        </authorList>
    </citation>
    <scope>ERRATUM OF PUBMED:14983052</scope>
</reference>
<name>OR4A5_HUMAN</name>
<gene>
    <name type="primary">OR4A5</name>
</gene>
<organism>
    <name type="scientific">Homo sapiens</name>
    <name type="common">Human</name>
    <dbReference type="NCBI Taxonomy" id="9606"/>
    <lineage>
        <taxon>Eukaryota</taxon>
        <taxon>Metazoa</taxon>
        <taxon>Chordata</taxon>
        <taxon>Craniata</taxon>
        <taxon>Vertebrata</taxon>
        <taxon>Euteleostomi</taxon>
        <taxon>Mammalia</taxon>
        <taxon>Eutheria</taxon>
        <taxon>Euarchontoglires</taxon>
        <taxon>Primates</taxon>
        <taxon>Haplorrhini</taxon>
        <taxon>Catarrhini</taxon>
        <taxon>Hominidae</taxon>
        <taxon>Homo</taxon>
    </lineage>
</organism>
<proteinExistence type="inferred from homology"/>